<feature type="chain" id="PRO_0000130450" description="Large ribosomal subunit protein uL29">
    <location>
        <begin position="1"/>
        <end position="63"/>
    </location>
</feature>
<name>RL29_SALTY</name>
<keyword id="KW-1185">Reference proteome</keyword>
<keyword id="KW-0687">Ribonucleoprotein</keyword>
<keyword id="KW-0689">Ribosomal protein</keyword>
<organism>
    <name type="scientific">Salmonella typhimurium (strain LT2 / SGSC1412 / ATCC 700720)</name>
    <dbReference type="NCBI Taxonomy" id="99287"/>
    <lineage>
        <taxon>Bacteria</taxon>
        <taxon>Pseudomonadati</taxon>
        <taxon>Pseudomonadota</taxon>
        <taxon>Gammaproteobacteria</taxon>
        <taxon>Enterobacterales</taxon>
        <taxon>Enterobacteriaceae</taxon>
        <taxon>Salmonella</taxon>
    </lineage>
</organism>
<gene>
    <name evidence="1" type="primary">rpmC</name>
    <name type="ordered locus">STM3432</name>
</gene>
<proteinExistence type="inferred from homology"/>
<sequence>MKAKELREKSVEELNTELLNLLREQFNLRMQAASGQLQQSHLLKQVRRDVARVKTLLTEKAGA</sequence>
<comment type="similarity">
    <text evidence="1">Belongs to the universal ribosomal protein uL29 family.</text>
</comment>
<dbReference type="EMBL" id="AE006468">
    <property type="protein sequence ID" value="AAL22295.1"/>
    <property type="molecule type" value="Genomic_DNA"/>
</dbReference>
<dbReference type="RefSeq" id="NP_462336.1">
    <property type="nucleotide sequence ID" value="NC_003197.2"/>
</dbReference>
<dbReference type="RefSeq" id="WP_000644742.1">
    <property type="nucleotide sequence ID" value="NC_003197.2"/>
</dbReference>
<dbReference type="SMR" id="P66170"/>
<dbReference type="STRING" id="99287.STM3432"/>
<dbReference type="PaxDb" id="99287-STM3432"/>
<dbReference type="GeneID" id="1254955"/>
<dbReference type="GeneID" id="93035739"/>
<dbReference type="KEGG" id="stm:STM3432"/>
<dbReference type="PATRIC" id="fig|99287.12.peg.3629"/>
<dbReference type="HOGENOM" id="CLU_158491_1_2_6"/>
<dbReference type="OMA" id="RFQMATS"/>
<dbReference type="PhylomeDB" id="P66170"/>
<dbReference type="BioCyc" id="SENT99287:STM3432-MONOMER"/>
<dbReference type="PRO" id="PR:P66170"/>
<dbReference type="Proteomes" id="UP000001014">
    <property type="component" value="Chromosome"/>
</dbReference>
<dbReference type="GO" id="GO:0022625">
    <property type="term" value="C:cytosolic large ribosomal subunit"/>
    <property type="evidence" value="ECO:0000318"/>
    <property type="project" value="GO_Central"/>
</dbReference>
<dbReference type="GO" id="GO:0003735">
    <property type="term" value="F:structural constituent of ribosome"/>
    <property type="evidence" value="ECO:0007669"/>
    <property type="project" value="InterPro"/>
</dbReference>
<dbReference type="GO" id="GO:0006412">
    <property type="term" value="P:translation"/>
    <property type="evidence" value="ECO:0007669"/>
    <property type="project" value="UniProtKB-UniRule"/>
</dbReference>
<dbReference type="CDD" id="cd00427">
    <property type="entry name" value="Ribosomal_L29_HIP"/>
    <property type="match status" value="1"/>
</dbReference>
<dbReference type="Gene3D" id="6.10.140.1970">
    <property type="match status" value="1"/>
</dbReference>
<dbReference type="HAMAP" id="MF_00374">
    <property type="entry name" value="Ribosomal_uL29"/>
    <property type="match status" value="1"/>
</dbReference>
<dbReference type="InterPro" id="IPR050063">
    <property type="entry name" value="Ribosomal_protein_uL29"/>
</dbReference>
<dbReference type="InterPro" id="IPR001854">
    <property type="entry name" value="Ribosomal_uL29"/>
</dbReference>
<dbReference type="InterPro" id="IPR018254">
    <property type="entry name" value="Ribosomal_uL29_CS"/>
</dbReference>
<dbReference type="InterPro" id="IPR036049">
    <property type="entry name" value="Ribosomal_uL29_sf"/>
</dbReference>
<dbReference type="NCBIfam" id="TIGR00012">
    <property type="entry name" value="L29"/>
    <property type="match status" value="1"/>
</dbReference>
<dbReference type="PANTHER" id="PTHR10916">
    <property type="entry name" value="60S RIBOSOMAL PROTEIN L35/50S RIBOSOMAL PROTEIN L29"/>
    <property type="match status" value="1"/>
</dbReference>
<dbReference type="PANTHER" id="PTHR10916:SF0">
    <property type="entry name" value="LARGE RIBOSOMAL SUBUNIT PROTEIN UL29C"/>
    <property type="match status" value="1"/>
</dbReference>
<dbReference type="Pfam" id="PF00831">
    <property type="entry name" value="Ribosomal_L29"/>
    <property type="match status" value="1"/>
</dbReference>
<dbReference type="SUPFAM" id="SSF46561">
    <property type="entry name" value="Ribosomal protein L29 (L29p)"/>
    <property type="match status" value="1"/>
</dbReference>
<dbReference type="PROSITE" id="PS00579">
    <property type="entry name" value="RIBOSOMAL_L29"/>
    <property type="match status" value="1"/>
</dbReference>
<evidence type="ECO:0000255" key="1">
    <source>
        <dbReference type="HAMAP-Rule" id="MF_00374"/>
    </source>
</evidence>
<evidence type="ECO:0000305" key="2"/>
<protein>
    <recommendedName>
        <fullName evidence="1">Large ribosomal subunit protein uL29</fullName>
    </recommendedName>
    <alternativeName>
        <fullName evidence="2">50S ribosomal protein L29</fullName>
    </alternativeName>
</protein>
<accession>P66170</accession>
<accession>Q8XEZ6</accession>
<reference key="1">
    <citation type="journal article" date="2001" name="Nature">
        <title>Complete genome sequence of Salmonella enterica serovar Typhimurium LT2.</title>
        <authorList>
            <person name="McClelland M."/>
            <person name="Sanderson K.E."/>
            <person name="Spieth J."/>
            <person name="Clifton S.W."/>
            <person name="Latreille P."/>
            <person name="Courtney L."/>
            <person name="Porwollik S."/>
            <person name="Ali J."/>
            <person name="Dante M."/>
            <person name="Du F."/>
            <person name="Hou S."/>
            <person name="Layman D."/>
            <person name="Leonard S."/>
            <person name="Nguyen C."/>
            <person name="Scott K."/>
            <person name="Holmes A."/>
            <person name="Grewal N."/>
            <person name="Mulvaney E."/>
            <person name="Ryan E."/>
            <person name="Sun H."/>
            <person name="Florea L."/>
            <person name="Miller W."/>
            <person name="Stoneking T."/>
            <person name="Nhan M."/>
            <person name="Waterston R."/>
            <person name="Wilson R.K."/>
        </authorList>
    </citation>
    <scope>NUCLEOTIDE SEQUENCE [LARGE SCALE GENOMIC DNA]</scope>
    <source>
        <strain>LT2 / SGSC1412 / ATCC 700720</strain>
    </source>
</reference>